<evidence type="ECO:0000250" key="1"/>
<evidence type="ECO:0000250" key="2">
    <source>
        <dbReference type="UniProtKB" id="P04156"/>
    </source>
</evidence>
<evidence type="ECO:0000250" key="3">
    <source>
        <dbReference type="UniProtKB" id="P04273"/>
    </source>
</evidence>
<evidence type="ECO:0000250" key="4">
    <source>
        <dbReference type="UniProtKB" id="P04925"/>
    </source>
</evidence>
<evidence type="ECO:0000255" key="5"/>
<evidence type="ECO:0000256" key="6">
    <source>
        <dbReference type="SAM" id="MobiDB-lite"/>
    </source>
</evidence>
<evidence type="ECO:0000305" key="7"/>
<protein>
    <recommendedName>
        <fullName>Major prion protein</fullName>
        <shortName>PrP</shortName>
    </recommendedName>
    <cdAntigenName>CD230</cdAntigenName>
</protein>
<sequence length="264" mass="28696">MVKSHIGSWILVLFVAMWSDVGLCKKRPKPGGGWNTGGSRYPGQGSPGGNRYPPQGGGGWGQPHGGGWGQPHGGGWGQPHGGGWGQPHGGGWGQPHGGGGWGQGGTHSQWNKPSKPKTNMKHVAGAAAAGAVVGGLGGYMLGSAMSRPLIHFGNDYEDRYYRENMYRYPNQVYYRPVDQYSNQNNFVHDCVNITVKQHTVTTTTKGENFTETDIKMMERVVEQMCITQYQRESQAYYQRGASVILFSSPPVILLISFLIFLIVG</sequence>
<feature type="signal peptide" evidence="1">
    <location>
        <begin position="1"/>
        <end position="24"/>
    </location>
</feature>
<feature type="chain" id="PRO_0000025611" description="Major prion protein">
    <location>
        <begin position="25"/>
        <end position="241"/>
    </location>
</feature>
<feature type="propeptide" id="PRO_0000025612" description="Removed in mature form" evidence="5">
    <location>
        <begin position="242"/>
        <end position="264"/>
    </location>
</feature>
<feature type="repeat" description="1">
    <location>
        <begin position="54"/>
        <end position="62"/>
    </location>
</feature>
<feature type="repeat" description="2">
    <location>
        <begin position="63"/>
        <end position="70"/>
    </location>
</feature>
<feature type="repeat" description="3">
    <location>
        <begin position="71"/>
        <end position="78"/>
    </location>
</feature>
<feature type="repeat" description="4">
    <location>
        <begin position="79"/>
        <end position="86"/>
    </location>
</feature>
<feature type="repeat" description="5">
    <location>
        <begin position="87"/>
        <end position="94"/>
    </location>
</feature>
<feature type="repeat" description="6">
    <location>
        <begin position="95"/>
        <end position="103"/>
    </location>
</feature>
<feature type="region of interest" description="Interaction with GRB2, ERI3 and SYN1" evidence="4">
    <location>
        <begin position="25"/>
        <end position="241"/>
    </location>
</feature>
<feature type="region of interest" description="Disordered" evidence="6">
    <location>
        <begin position="28"/>
        <end position="119"/>
    </location>
</feature>
<feature type="region of interest" description="6 X 8 AA tandem repeats of P-H-G-G-G-W-G-Q">
    <location>
        <begin position="54"/>
        <end position="103"/>
    </location>
</feature>
<feature type="compositionally biased region" description="Gly residues" evidence="6">
    <location>
        <begin position="55"/>
        <end position="105"/>
    </location>
</feature>
<feature type="binding site" evidence="2">
    <location>
        <position position="72"/>
    </location>
    <ligand>
        <name>Cu(2+)</name>
        <dbReference type="ChEBI" id="CHEBI:29036"/>
        <label>1</label>
    </ligand>
</feature>
<feature type="binding site" evidence="2">
    <location>
        <position position="73"/>
    </location>
    <ligand>
        <name>Cu(2+)</name>
        <dbReference type="ChEBI" id="CHEBI:29036"/>
        <label>1</label>
    </ligand>
</feature>
<feature type="binding site" evidence="2">
    <location>
        <position position="74"/>
    </location>
    <ligand>
        <name>Cu(2+)</name>
        <dbReference type="ChEBI" id="CHEBI:29036"/>
        <label>1</label>
    </ligand>
</feature>
<feature type="binding site" evidence="2">
    <location>
        <position position="80"/>
    </location>
    <ligand>
        <name>Cu(2+)</name>
        <dbReference type="ChEBI" id="CHEBI:29036"/>
        <label>2</label>
    </ligand>
</feature>
<feature type="binding site" evidence="2">
    <location>
        <position position="81"/>
    </location>
    <ligand>
        <name>Cu(2+)</name>
        <dbReference type="ChEBI" id="CHEBI:29036"/>
        <label>2</label>
    </ligand>
</feature>
<feature type="binding site" evidence="2">
    <location>
        <position position="82"/>
    </location>
    <ligand>
        <name>Cu(2+)</name>
        <dbReference type="ChEBI" id="CHEBI:29036"/>
        <label>2</label>
    </ligand>
</feature>
<feature type="binding site" evidence="2">
    <location>
        <position position="88"/>
    </location>
    <ligand>
        <name>Cu(2+)</name>
        <dbReference type="ChEBI" id="CHEBI:29036"/>
        <label>3</label>
    </ligand>
</feature>
<feature type="binding site" evidence="2">
    <location>
        <position position="89"/>
    </location>
    <ligand>
        <name>Cu(2+)</name>
        <dbReference type="ChEBI" id="CHEBI:29036"/>
        <label>3</label>
    </ligand>
</feature>
<feature type="binding site" evidence="2">
    <location>
        <position position="90"/>
    </location>
    <ligand>
        <name>Cu(2+)</name>
        <dbReference type="ChEBI" id="CHEBI:29036"/>
        <label>3</label>
    </ligand>
</feature>
<feature type="binding site" evidence="2">
    <location>
        <position position="96"/>
    </location>
    <ligand>
        <name>Cu(2+)</name>
        <dbReference type="ChEBI" id="CHEBI:29036"/>
        <label>4</label>
    </ligand>
</feature>
<feature type="binding site" evidence="2">
    <location>
        <position position="98"/>
    </location>
    <ligand>
        <name>Cu(2+)</name>
        <dbReference type="ChEBI" id="CHEBI:29036"/>
        <label>4</label>
    </ligand>
</feature>
<feature type="binding site" evidence="2">
    <location>
        <position position="99"/>
    </location>
    <ligand>
        <name>Cu(2+)</name>
        <dbReference type="ChEBI" id="CHEBI:29036"/>
        <label>4</label>
    </ligand>
</feature>
<feature type="lipid moiety-binding region" description="GPI-anchor amidated alanine" evidence="5">
    <location>
        <position position="241"/>
    </location>
</feature>
<feature type="glycosylation site" description="N-linked (GlcNAc...) asparagine" evidence="5">
    <location>
        <position position="192"/>
    </location>
</feature>
<feature type="glycosylation site" description="N-linked (GlcNAc...) asparagine" evidence="5">
    <location>
        <position position="208"/>
    </location>
</feature>
<feature type="disulfide bond" evidence="3">
    <location>
        <begin position="190"/>
        <end position="225"/>
    </location>
</feature>
<accession>Q5UJG1</accession>
<comment type="function">
    <text evidence="2 4">Its primary physiological function is unclear. Has cytoprotective activity against internal or environmental stresses. May play a role in neuronal development and synaptic plasticity. May be required for neuronal myelin sheath maintenance. May play a role in iron uptake and iron homeostasis. Soluble oligomers are toxic to cultured neuroblastoma cells and induce apoptosis (in vitro). Association with GPC1 (via its heparan sulfate chains) targets PRNP to lipid rafts. Also provides Cu(2+) or Zn(2+) for the ascorbate-mediated GPC1 deaminase degradation of its heparan sulfate side chains (By similarity).</text>
</comment>
<comment type="subunit">
    <text evidence="2 4">Monomer and homodimer. Has a tendency to aggregate into amyloid fibrils containing a cross-beta spine, formed by a steric zipper of superposed beta-strands. Soluble oligomers may represent an intermediate stage on the path to fibril formation. Copper binding may promote oligomerization. Interacts with GRB2, APP, ERI3/PRNPIP and SYN1. Mislocalized cytosolically exposed PrP interacts with MGRN1; this interaction alters MGRN1 subcellular location and causes lysosomal enlargement. Interacts with KIAA1191.</text>
</comment>
<comment type="subcellular location">
    <subcellularLocation>
        <location evidence="2">Cell membrane</location>
        <topology evidence="2">Lipid-anchor</topology>
        <topology evidence="2">GPI-anchor</topology>
    </subcellularLocation>
    <subcellularLocation>
        <location evidence="4">Golgi apparatus</location>
    </subcellularLocation>
    <text evidence="2">Targeted to lipid rafts via association with the heparan sulfate chains of GPC1. Colocates, in the presence of Cu(2+), to vesicles in para- and perinuclear regions, where both proteins undergo internalization. Heparin displaces PRNP from lipid rafts and promotes endocytosis.</text>
</comment>
<comment type="domain">
    <text evidence="2">The normal, monomeric form has a mainly alpha-helical structure. The disease-associated, protease-resistant form forms amyloid fibrils containing a cross-beta spine, formed by a steric zipper of superposed beta-strands. Disease mutations may favor intermolecular contacts via short beta strands, and may thereby trigger oligomerization.</text>
</comment>
<comment type="domain">
    <text evidence="2">Contains an N-terminal region composed of octamer repeats. At low copper concentrations, the sidechains of His residues from three or four repeats contribute to the binding of a single copper ion. Alternatively, a copper ion can be bound by interaction with the sidechain and backbone amide nitrogen of a single His residue. The observed copper binding stoichiometry suggests that two repeat regions cooperate to stabilize the binding of a single copper ion. At higher copper concentrations, each octamer can bind one copper ion by interactions with the His sidechain and Gly backbone atoms. A mixture of binding types may occur, especially in the case of octamer repeat expansion. Copper binding may stabilize the conformation of this region and may promote oligomerization.</text>
</comment>
<comment type="disease">
    <text evidence="7">Found in high quantity in the brain of humans and animals infected with degenerative neurological diseases such as kuru, Creutzfeldt-Jakob disease (CJD), Gerstmann-Straussler syndrome (GSS), scrapie, bovine spongiform encephalopathy (BSE), transmissible mink encephalopathy (TME), etc.</text>
</comment>
<comment type="similarity">
    <text evidence="7">Belongs to the prion family.</text>
</comment>
<reference key="1">
    <citation type="journal article" date="2004" name="Proc. Natl. Acad. Sci. U.S.A.">
        <title>Prion protein gene (PRNP) variants and evidence for strong purifying selection in functionally important regions of bovine exon 3.</title>
        <authorList>
            <person name="Seabury C.M."/>
            <person name="Honeycutt R.L."/>
            <person name="Rooney A.P."/>
            <person name="Halbert N.D."/>
            <person name="Derr J.N."/>
        </authorList>
    </citation>
    <scope>NUCLEOTIDE SEQUENCE [GENOMIC DNA]</scope>
    <source>
        <strain>Isolate BlackbuckhomoA</strain>
        <strain>Isolate BlackbuckhomoB</strain>
    </source>
</reference>
<proteinExistence type="inferred from homology"/>
<dbReference type="EMBL" id="AY720705">
    <property type="protein sequence ID" value="AAV30512.1"/>
    <property type="molecule type" value="Genomic_DNA"/>
</dbReference>
<dbReference type="EMBL" id="AY720706">
    <property type="protein sequence ID" value="AAV30513.1"/>
    <property type="molecule type" value="Genomic_DNA"/>
</dbReference>
<dbReference type="BMRB" id="Q5UJG1"/>
<dbReference type="SMR" id="Q5UJG1"/>
<dbReference type="GlyCosmos" id="Q5UJG1">
    <property type="glycosylation" value="2 sites, No reported glycans"/>
</dbReference>
<dbReference type="GO" id="GO:0005794">
    <property type="term" value="C:Golgi apparatus"/>
    <property type="evidence" value="ECO:0007669"/>
    <property type="project" value="UniProtKB-SubCell"/>
</dbReference>
<dbReference type="GO" id="GO:0005886">
    <property type="term" value="C:plasma membrane"/>
    <property type="evidence" value="ECO:0007669"/>
    <property type="project" value="UniProtKB-SubCell"/>
</dbReference>
<dbReference type="GO" id="GO:0098552">
    <property type="term" value="C:side of membrane"/>
    <property type="evidence" value="ECO:0007669"/>
    <property type="project" value="UniProtKB-KW"/>
</dbReference>
<dbReference type="GO" id="GO:0005507">
    <property type="term" value="F:copper ion binding"/>
    <property type="evidence" value="ECO:0000250"/>
    <property type="project" value="UniProtKB"/>
</dbReference>
<dbReference type="GO" id="GO:0051260">
    <property type="term" value="P:protein homooligomerization"/>
    <property type="evidence" value="ECO:0007669"/>
    <property type="project" value="InterPro"/>
</dbReference>
<dbReference type="FunFam" id="1.10.790.10:FF:000001">
    <property type="entry name" value="Major prion protein"/>
    <property type="match status" value="1"/>
</dbReference>
<dbReference type="Gene3D" id="1.10.790.10">
    <property type="entry name" value="Prion/Doppel protein, beta-ribbon domain"/>
    <property type="match status" value="1"/>
</dbReference>
<dbReference type="InterPro" id="IPR000817">
    <property type="entry name" value="Prion"/>
</dbReference>
<dbReference type="InterPro" id="IPR036924">
    <property type="entry name" value="Prion/Doppel_b-ribbon_dom_sf"/>
</dbReference>
<dbReference type="InterPro" id="IPR022416">
    <property type="entry name" value="Prion/Doppel_prot_b-ribbon_dom"/>
</dbReference>
<dbReference type="InterPro" id="IPR020949">
    <property type="entry name" value="Prion_copper_b_octapeptide"/>
</dbReference>
<dbReference type="InterPro" id="IPR025860">
    <property type="entry name" value="Prion_N"/>
</dbReference>
<dbReference type="PANTHER" id="PTHR15506">
    <property type="entry name" value="DOPPEL PRION"/>
    <property type="match status" value="1"/>
</dbReference>
<dbReference type="PANTHER" id="PTHR15506:SF2">
    <property type="entry name" value="MAJOR PRION PROTEIN"/>
    <property type="match status" value="1"/>
</dbReference>
<dbReference type="Pfam" id="PF00377">
    <property type="entry name" value="Prion"/>
    <property type="match status" value="1"/>
</dbReference>
<dbReference type="Pfam" id="PF11587">
    <property type="entry name" value="Prion_bPrPp"/>
    <property type="match status" value="1"/>
</dbReference>
<dbReference type="Pfam" id="PF03991">
    <property type="entry name" value="Prion_octapep"/>
    <property type="match status" value="1"/>
</dbReference>
<dbReference type="PRINTS" id="PR00341">
    <property type="entry name" value="PRION"/>
</dbReference>
<dbReference type="SMART" id="SM00157">
    <property type="entry name" value="PRP"/>
    <property type="match status" value="1"/>
</dbReference>
<dbReference type="SUPFAM" id="SSF54098">
    <property type="entry name" value="Prion-like"/>
    <property type="match status" value="1"/>
</dbReference>
<dbReference type="PROSITE" id="PS00291">
    <property type="entry name" value="PRION_1"/>
    <property type="match status" value="1"/>
</dbReference>
<dbReference type="PROSITE" id="PS00706">
    <property type="entry name" value="PRION_2"/>
    <property type="match status" value="1"/>
</dbReference>
<organism>
    <name type="scientific">Antilope cervicapra</name>
    <name type="common">Blackbuck</name>
    <dbReference type="NCBI Taxonomy" id="59525"/>
    <lineage>
        <taxon>Eukaryota</taxon>
        <taxon>Metazoa</taxon>
        <taxon>Chordata</taxon>
        <taxon>Craniata</taxon>
        <taxon>Vertebrata</taxon>
        <taxon>Euteleostomi</taxon>
        <taxon>Mammalia</taxon>
        <taxon>Eutheria</taxon>
        <taxon>Laurasiatheria</taxon>
        <taxon>Artiodactyla</taxon>
        <taxon>Ruminantia</taxon>
        <taxon>Pecora</taxon>
        <taxon>Bovidae</taxon>
        <taxon>Antilopinae</taxon>
        <taxon>Antilope</taxon>
    </lineage>
</organism>
<gene>
    <name type="primary">PRNP</name>
    <name type="synonym">PRP</name>
</gene>
<keyword id="KW-0034">Amyloid</keyword>
<keyword id="KW-1003">Cell membrane</keyword>
<keyword id="KW-0186">Copper</keyword>
<keyword id="KW-1015">Disulfide bond</keyword>
<keyword id="KW-0325">Glycoprotein</keyword>
<keyword id="KW-0333">Golgi apparatus</keyword>
<keyword id="KW-0336">GPI-anchor</keyword>
<keyword id="KW-0449">Lipoprotein</keyword>
<keyword id="KW-0472">Membrane</keyword>
<keyword id="KW-0479">Metal-binding</keyword>
<keyword id="KW-0640">Prion</keyword>
<keyword id="KW-0677">Repeat</keyword>
<keyword id="KW-0732">Signal</keyword>
<keyword id="KW-0862">Zinc</keyword>
<name>PRIO_ANTCE</name>